<organism>
    <name type="scientific">Bacillus cereus (strain AH820)</name>
    <dbReference type="NCBI Taxonomy" id="405535"/>
    <lineage>
        <taxon>Bacteria</taxon>
        <taxon>Bacillati</taxon>
        <taxon>Bacillota</taxon>
        <taxon>Bacilli</taxon>
        <taxon>Bacillales</taxon>
        <taxon>Bacillaceae</taxon>
        <taxon>Bacillus</taxon>
        <taxon>Bacillus cereus group</taxon>
    </lineage>
</organism>
<protein>
    <recommendedName>
        <fullName evidence="1">Lipoyl synthase</fullName>
        <ecNumber evidence="1">2.8.1.8</ecNumber>
    </recommendedName>
    <alternativeName>
        <fullName evidence="1">Lip-syn</fullName>
        <shortName evidence="1">LS</shortName>
    </alternativeName>
    <alternativeName>
        <fullName evidence="1">Lipoate synthase</fullName>
    </alternativeName>
    <alternativeName>
        <fullName evidence="1">Lipoic acid synthase</fullName>
    </alternativeName>
    <alternativeName>
        <fullName evidence="1">Sulfur insertion protein LipA</fullName>
    </alternativeName>
</protein>
<proteinExistence type="inferred from homology"/>
<accession>B7JDM3</accession>
<feature type="chain" id="PRO_1000191445" description="Lipoyl synthase">
    <location>
        <begin position="1"/>
        <end position="298"/>
    </location>
</feature>
<feature type="domain" description="Radical SAM core" evidence="2">
    <location>
        <begin position="53"/>
        <end position="269"/>
    </location>
</feature>
<feature type="binding site" evidence="1">
    <location>
        <position position="40"/>
    </location>
    <ligand>
        <name>[4Fe-4S] cluster</name>
        <dbReference type="ChEBI" id="CHEBI:49883"/>
        <label>1</label>
    </ligand>
</feature>
<feature type="binding site" evidence="1">
    <location>
        <position position="45"/>
    </location>
    <ligand>
        <name>[4Fe-4S] cluster</name>
        <dbReference type="ChEBI" id="CHEBI:49883"/>
        <label>1</label>
    </ligand>
</feature>
<feature type="binding site" evidence="1">
    <location>
        <position position="51"/>
    </location>
    <ligand>
        <name>[4Fe-4S] cluster</name>
        <dbReference type="ChEBI" id="CHEBI:49883"/>
        <label>1</label>
    </ligand>
</feature>
<feature type="binding site" evidence="1">
    <location>
        <position position="67"/>
    </location>
    <ligand>
        <name>[4Fe-4S] cluster</name>
        <dbReference type="ChEBI" id="CHEBI:49883"/>
        <label>2</label>
        <note>4Fe-4S-S-AdoMet</note>
    </ligand>
</feature>
<feature type="binding site" evidence="1">
    <location>
        <position position="71"/>
    </location>
    <ligand>
        <name>[4Fe-4S] cluster</name>
        <dbReference type="ChEBI" id="CHEBI:49883"/>
        <label>2</label>
        <note>4Fe-4S-S-AdoMet</note>
    </ligand>
</feature>
<feature type="binding site" evidence="1">
    <location>
        <position position="74"/>
    </location>
    <ligand>
        <name>[4Fe-4S] cluster</name>
        <dbReference type="ChEBI" id="CHEBI:49883"/>
        <label>2</label>
        <note>4Fe-4S-S-AdoMet</note>
    </ligand>
</feature>
<feature type="binding site" evidence="1">
    <location>
        <position position="280"/>
    </location>
    <ligand>
        <name>[4Fe-4S] cluster</name>
        <dbReference type="ChEBI" id="CHEBI:49883"/>
        <label>1</label>
    </ligand>
</feature>
<comment type="function">
    <text evidence="1">Catalyzes the radical-mediated insertion of two sulfur atoms into the C-6 and C-8 positions of the octanoyl moiety bound to the lipoyl domains of lipoate-dependent enzymes, thereby converting the octanoylated domains into lipoylated derivatives.</text>
</comment>
<comment type="catalytic activity">
    <reaction evidence="1">
        <text>[[Fe-S] cluster scaffold protein carrying a second [4Fe-4S](2+) cluster] + N(6)-octanoyl-L-lysyl-[protein] + 2 oxidized [2Fe-2S]-[ferredoxin] + 2 S-adenosyl-L-methionine + 4 H(+) = [[Fe-S] cluster scaffold protein] + N(6)-[(R)-dihydrolipoyl]-L-lysyl-[protein] + 4 Fe(3+) + 2 hydrogen sulfide + 2 5'-deoxyadenosine + 2 L-methionine + 2 reduced [2Fe-2S]-[ferredoxin]</text>
        <dbReference type="Rhea" id="RHEA:16585"/>
        <dbReference type="Rhea" id="RHEA-COMP:9928"/>
        <dbReference type="Rhea" id="RHEA-COMP:10000"/>
        <dbReference type="Rhea" id="RHEA-COMP:10001"/>
        <dbReference type="Rhea" id="RHEA-COMP:10475"/>
        <dbReference type="Rhea" id="RHEA-COMP:14568"/>
        <dbReference type="Rhea" id="RHEA-COMP:14569"/>
        <dbReference type="ChEBI" id="CHEBI:15378"/>
        <dbReference type="ChEBI" id="CHEBI:17319"/>
        <dbReference type="ChEBI" id="CHEBI:29034"/>
        <dbReference type="ChEBI" id="CHEBI:29919"/>
        <dbReference type="ChEBI" id="CHEBI:33722"/>
        <dbReference type="ChEBI" id="CHEBI:33737"/>
        <dbReference type="ChEBI" id="CHEBI:33738"/>
        <dbReference type="ChEBI" id="CHEBI:57844"/>
        <dbReference type="ChEBI" id="CHEBI:59789"/>
        <dbReference type="ChEBI" id="CHEBI:78809"/>
        <dbReference type="ChEBI" id="CHEBI:83100"/>
        <dbReference type="EC" id="2.8.1.8"/>
    </reaction>
</comment>
<comment type="cofactor">
    <cofactor evidence="1">
        <name>[4Fe-4S] cluster</name>
        <dbReference type="ChEBI" id="CHEBI:49883"/>
    </cofactor>
    <text evidence="1">Binds 2 [4Fe-4S] clusters per subunit. One cluster is coordinated with 3 cysteines and an exchangeable S-adenosyl-L-methionine.</text>
</comment>
<comment type="pathway">
    <text evidence="1">Protein modification; protein lipoylation via endogenous pathway; protein N(6)-(lipoyl)lysine from octanoyl-[acyl-carrier-protein].</text>
</comment>
<comment type="subcellular location">
    <subcellularLocation>
        <location evidence="1">Cytoplasm</location>
    </subcellularLocation>
</comment>
<comment type="similarity">
    <text evidence="1">Belongs to the radical SAM superfamily. Lipoyl synthase family.</text>
</comment>
<sequence>MTKQTEYKRKPEWLKIKLNTNENYTGLKKMMRSKNLHTVCEEAKCPNIHECWAVRKTATFMILGAVCTRACRFCAVKTGLPTELDLQEPERVADSVVQMGLKHVVITAVARDDLKDGGAAVFAETVRAVRRKNPFTSIEVLPSDMGGVEENLKMLMDAKPDILNHNIETVRRLSNRVRARAKYDRSLEFLRRAKEMQPDIPTKSSIMVGLGETREDLIEAMDDLRANNVDILTLGQYLQPSKKHLPVLKYYPPAEFAELKEIALSKGFSHCEAGPLVRSSYHADEQVRSAKEKTAEAK</sequence>
<dbReference type="EC" id="2.8.1.8" evidence="1"/>
<dbReference type="EMBL" id="CP001283">
    <property type="protein sequence ID" value="ACK87323.1"/>
    <property type="molecule type" value="Genomic_DNA"/>
</dbReference>
<dbReference type="RefSeq" id="WP_000166375.1">
    <property type="nucleotide sequence ID" value="NC_011773.1"/>
</dbReference>
<dbReference type="SMR" id="B7JDM3"/>
<dbReference type="GeneID" id="93006112"/>
<dbReference type="KEGG" id="bcu:BCAH820_5076"/>
<dbReference type="HOGENOM" id="CLU_033144_2_1_9"/>
<dbReference type="Proteomes" id="UP000001363">
    <property type="component" value="Chromosome"/>
</dbReference>
<dbReference type="GO" id="GO:0005737">
    <property type="term" value="C:cytoplasm"/>
    <property type="evidence" value="ECO:0007669"/>
    <property type="project" value="UniProtKB-SubCell"/>
</dbReference>
<dbReference type="GO" id="GO:0051539">
    <property type="term" value="F:4 iron, 4 sulfur cluster binding"/>
    <property type="evidence" value="ECO:0007669"/>
    <property type="project" value="UniProtKB-UniRule"/>
</dbReference>
<dbReference type="GO" id="GO:0016992">
    <property type="term" value="F:lipoate synthase activity"/>
    <property type="evidence" value="ECO:0007669"/>
    <property type="project" value="UniProtKB-UniRule"/>
</dbReference>
<dbReference type="GO" id="GO:0046872">
    <property type="term" value="F:metal ion binding"/>
    <property type="evidence" value="ECO:0007669"/>
    <property type="project" value="UniProtKB-KW"/>
</dbReference>
<dbReference type="CDD" id="cd01335">
    <property type="entry name" value="Radical_SAM"/>
    <property type="match status" value="1"/>
</dbReference>
<dbReference type="FunFam" id="3.20.20.70:FF:000040">
    <property type="entry name" value="Lipoyl synthase"/>
    <property type="match status" value="1"/>
</dbReference>
<dbReference type="Gene3D" id="3.20.20.70">
    <property type="entry name" value="Aldolase class I"/>
    <property type="match status" value="1"/>
</dbReference>
<dbReference type="HAMAP" id="MF_00206">
    <property type="entry name" value="Lipoyl_synth"/>
    <property type="match status" value="1"/>
</dbReference>
<dbReference type="InterPro" id="IPR013785">
    <property type="entry name" value="Aldolase_TIM"/>
</dbReference>
<dbReference type="InterPro" id="IPR006638">
    <property type="entry name" value="Elp3/MiaA/NifB-like_rSAM"/>
</dbReference>
<dbReference type="InterPro" id="IPR031691">
    <property type="entry name" value="LIAS_N"/>
</dbReference>
<dbReference type="InterPro" id="IPR003698">
    <property type="entry name" value="Lipoyl_synth"/>
</dbReference>
<dbReference type="InterPro" id="IPR007197">
    <property type="entry name" value="rSAM"/>
</dbReference>
<dbReference type="NCBIfam" id="TIGR00510">
    <property type="entry name" value="lipA"/>
    <property type="match status" value="1"/>
</dbReference>
<dbReference type="NCBIfam" id="NF004019">
    <property type="entry name" value="PRK05481.1"/>
    <property type="match status" value="1"/>
</dbReference>
<dbReference type="NCBIfam" id="NF009544">
    <property type="entry name" value="PRK12928.1"/>
    <property type="match status" value="1"/>
</dbReference>
<dbReference type="PANTHER" id="PTHR10949">
    <property type="entry name" value="LIPOYL SYNTHASE"/>
    <property type="match status" value="1"/>
</dbReference>
<dbReference type="PANTHER" id="PTHR10949:SF0">
    <property type="entry name" value="LIPOYL SYNTHASE, MITOCHONDRIAL"/>
    <property type="match status" value="1"/>
</dbReference>
<dbReference type="Pfam" id="PF16881">
    <property type="entry name" value="LIAS_N"/>
    <property type="match status" value="1"/>
</dbReference>
<dbReference type="Pfam" id="PF04055">
    <property type="entry name" value="Radical_SAM"/>
    <property type="match status" value="1"/>
</dbReference>
<dbReference type="PIRSF" id="PIRSF005963">
    <property type="entry name" value="Lipoyl_synth"/>
    <property type="match status" value="1"/>
</dbReference>
<dbReference type="SFLD" id="SFLDF00271">
    <property type="entry name" value="lipoyl_synthase"/>
    <property type="match status" value="1"/>
</dbReference>
<dbReference type="SFLD" id="SFLDG01058">
    <property type="entry name" value="lipoyl_synthase_like"/>
    <property type="match status" value="1"/>
</dbReference>
<dbReference type="SMART" id="SM00729">
    <property type="entry name" value="Elp3"/>
    <property type="match status" value="1"/>
</dbReference>
<dbReference type="SUPFAM" id="SSF102114">
    <property type="entry name" value="Radical SAM enzymes"/>
    <property type="match status" value="1"/>
</dbReference>
<dbReference type="PROSITE" id="PS51918">
    <property type="entry name" value="RADICAL_SAM"/>
    <property type="match status" value="1"/>
</dbReference>
<name>LIPA_BACC0</name>
<evidence type="ECO:0000255" key="1">
    <source>
        <dbReference type="HAMAP-Rule" id="MF_00206"/>
    </source>
</evidence>
<evidence type="ECO:0000255" key="2">
    <source>
        <dbReference type="PROSITE-ProRule" id="PRU01266"/>
    </source>
</evidence>
<reference key="1">
    <citation type="submission" date="2008-10" db="EMBL/GenBank/DDBJ databases">
        <title>Genome sequence of Bacillus cereus AH820.</title>
        <authorList>
            <person name="Dodson R.J."/>
            <person name="Durkin A.S."/>
            <person name="Rosovitz M.J."/>
            <person name="Rasko D.A."/>
            <person name="Hoffmaster A."/>
            <person name="Ravel J."/>
            <person name="Sutton G."/>
        </authorList>
    </citation>
    <scope>NUCLEOTIDE SEQUENCE [LARGE SCALE GENOMIC DNA]</scope>
    <source>
        <strain>AH820</strain>
    </source>
</reference>
<keyword id="KW-0004">4Fe-4S</keyword>
<keyword id="KW-0963">Cytoplasm</keyword>
<keyword id="KW-0408">Iron</keyword>
<keyword id="KW-0411">Iron-sulfur</keyword>
<keyword id="KW-0479">Metal-binding</keyword>
<keyword id="KW-0949">S-adenosyl-L-methionine</keyword>
<keyword id="KW-0808">Transferase</keyword>
<gene>
    <name evidence="1" type="primary">lipA</name>
    <name type="ordered locus">BCAH820_5076</name>
</gene>